<proteinExistence type="inferred from homology"/>
<reference key="1">
    <citation type="journal article" date="2009" name="Proc. Natl. Acad. Sci. U.S.A.">
        <title>Eukaryote-to-eukaryote gene transfer events revealed by the genome sequence of the wine yeast Saccharomyces cerevisiae EC1118.</title>
        <authorList>
            <person name="Novo M."/>
            <person name="Bigey F."/>
            <person name="Beyne E."/>
            <person name="Galeote V."/>
            <person name="Gavory F."/>
            <person name="Mallet S."/>
            <person name="Cambon B."/>
            <person name="Legras J.-L."/>
            <person name="Wincker P."/>
            <person name="Casaregola S."/>
            <person name="Dequin S."/>
        </authorList>
    </citation>
    <scope>NUCLEOTIDE SEQUENCE [LARGE SCALE GENOMIC DNA]</scope>
    <source>
        <strain>Lalvin EC1118 / Prise de mousse</strain>
    </source>
</reference>
<sequence>MSQSRWSIVLIFALFIFGSTGVNAFFNFGHHQQQQQQQQQSYEDQVLNNPCDGYLCPDTLTCVAQQKDCPCPFPKSQLKCVLPDNKFVCISKPATHNEKFRAIYDDPVKGPKAKNKGFRDCGWVSDAYKNH</sequence>
<comment type="function">
    <text evidence="1">Probable component of the endoplasmic reticulum-associated degradation (ERAD) pathway.</text>
</comment>
<comment type="similarity">
    <text evidence="3">Belongs to the LCL2 family.</text>
</comment>
<keyword id="KW-0732">Signal</keyword>
<feature type="signal peptide" evidence="2">
    <location>
        <begin position="1"/>
        <end position="24"/>
    </location>
</feature>
<feature type="chain" id="PRO_0000408636" description="Long chronological lifespan protein 2">
    <location>
        <begin position="25"/>
        <end position="131"/>
    </location>
</feature>
<gene>
    <name type="primary">LCL2</name>
    <name type="ORF">EC1118_1L10_1849g</name>
</gene>
<dbReference type="EMBL" id="FN393078">
    <property type="protein sequence ID" value="CAY81341.1"/>
    <property type="molecule type" value="Genomic_DNA"/>
</dbReference>
<dbReference type="SMR" id="C8ZD75"/>
<dbReference type="HOGENOM" id="CLU_142363_1_0_1"/>
<dbReference type="OrthoDB" id="38606at4893"/>
<dbReference type="Proteomes" id="UP000000286">
    <property type="component" value="Chromosome XII, Scaffold EC1118_1L10"/>
</dbReference>
<dbReference type="GO" id="GO:0036503">
    <property type="term" value="P:ERAD pathway"/>
    <property type="evidence" value="ECO:0007669"/>
    <property type="project" value="TreeGrafter"/>
</dbReference>
<dbReference type="CDD" id="cd23996">
    <property type="entry name" value="LCL2-like"/>
    <property type="match status" value="1"/>
</dbReference>
<dbReference type="InterPro" id="IPR034543">
    <property type="entry name" value="LCL2"/>
</dbReference>
<dbReference type="PANTHER" id="PTHR38425">
    <property type="entry name" value="LONG CHRONOLOGICAL LIFESPAN PROTEIN 2"/>
    <property type="match status" value="1"/>
</dbReference>
<dbReference type="PANTHER" id="PTHR38425:SF1">
    <property type="entry name" value="LONG CHRONOLOGICAL LIFESPAN PROTEIN 2"/>
    <property type="match status" value="1"/>
</dbReference>
<name>LCL2_YEAS8</name>
<protein>
    <recommendedName>
        <fullName>Long chronological lifespan protein 2</fullName>
    </recommendedName>
</protein>
<accession>C8ZD75</accession>
<organism>
    <name type="scientific">Saccharomyces cerevisiae (strain Lalvin EC1118 / Prise de mousse)</name>
    <name type="common">Baker's yeast</name>
    <dbReference type="NCBI Taxonomy" id="643680"/>
    <lineage>
        <taxon>Eukaryota</taxon>
        <taxon>Fungi</taxon>
        <taxon>Dikarya</taxon>
        <taxon>Ascomycota</taxon>
        <taxon>Saccharomycotina</taxon>
        <taxon>Saccharomycetes</taxon>
        <taxon>Saccharomycetales</taxon>
        <taxon>Saccharomycetaceae</taxon>
        <taxon>Saccharomyces</taxon>
    </lineage>
</organism>
<evidence type="ECO:0000250" key="1"/>
<evidence type="ECO:0000255" key="2"/>
<evidence type="ECO:0000305" key="3"/>